<keyword id="KW-0167">Capsid protein</keyword>
<keyword id="KW-1185">Reference proteome</keyword>
<keyword id="KW-1140">T=1 icosahedral capsid protein</keyword>
<keyword id="KW-0946">Virion</keyword>
<sequence length="673" mass="80268">MPFWWGRRNKFWYGRNYRRKKRRFPKRRKRRFYRRTKYRRPARRRRRRRRKVRRKKKTLIVRQWQPDSIVLCKIKGYDSIIWGAEGTQFQCSTHEMYEYTRQKYPGGGGFGVQLYSLEYLYDQWKLRNNIWTKTNQLKDLCRYLKCVMTFYRHQHIDFVIVYERQPPFEIDKLTYMKYHPYMLLQRKHKIILPSQTTNPRGKLKKKKTIKPPKQMLSKWFFQQQFAKYDLLLIAAAACSLRYPRIGCCNENRMITLYCLNTKFYQDTEWGTTKQAPHYFKPYATINKSMIFVSNYGGKKTEYNIGQWIETDIPGEGNLARYYRSISKEGGYFSPKILQAYQTKVKSVDYKPLPIVLGRYNPAIDDGKGNKIYLQTIMNGHWGLPQKTPDYIIEEVPLWLGFWGYYNYLKQTRTEAIFPLHMFVVQSKYIQTQQTETPNNFWAFIDNSFIQGKNPWDSVITYSEQKLWFPTVAWQLKTINAICESGPYVPKLDNQTYSTWELATHYSFHFKWGGPQISDQPVEDPGNKNKYDVPDTIKEALQIVNPAKNIAATMFHDWDYRRGCITSTAIKRMQQNLPTDSSLESDSDSEPAPKKKRLLPVLHDPQKKTEKINQCLLSLCEESTCQEQETEENILKLIQQQQQQQQKLKHNLLVLIKDLKVKQRLLQLQTGVLE</sequence>
<dbReference type="EMBL" id="AB290918">
    <property type="protein sequence ID" value="BAF49427.1"/>
    <property type="molecule type" value="Genomic_DNA"/>
</dbReference>
<dbReference type="SMR" id="A4GZ97"/>
<dbReference type="Proteomes" id="UP000007078">
    <property type="component" value="Genome"/>
</dbReference>
<dbReference type="GO" id="GO:0039615">
    <property type="term" value="C:T=1 icosahedral viral capsid"/>
    <property type="evidence" value="ECO:0007669"/>
    <property type="project" value="UniProtKB-KW"/>
</dbReference>
<dbReference type="InterPro" id="IPR004219">
    <property type="entry name" value="TTvirus_Unk"/>
</dbReference>
<dbReference type="Pfam" id="PF02956">
    <property type="entry name" value="TT_ORF1"/>
    <property type="match status" value="1"/>
</dbReference>
<comment type="function">
    <text evidence="1">Self-assembles to form an icosahedral capsid with a T=1 symmetry, about 30 nm in diameter, and consisting of 60 capsid proteins. The capsid encapsulates the genomic DNA. Capsid protein is involved in attachment and entry into the host cell (By similarity).</text>
</comment>
<comment type="subcellular location">
    <subcellularLocation>
        <location evidence="3">Virion</location>
    </subcellularLocation>
</comment>
<comment type="similarity">
    <text evidence="3">Belongs to the anelloviridae capsid protein family.</text>
</comment>
<organismHost>
    <name type="scientific">Homo sapiens</name>
    <name type="common">Human</name>
    <dbReference type="NCBI Taxonomy" id="9606"/>
</organismHost>
<feature type="chain" id="PRO_0000404275" description="Capsid protein">
    <location>
        <begin position="1"/>
        <end position="673"/>
    </location>
</feature>
<feature type="region of interest" description="Disordered" evidence="2">
    <location>
        <begin position="575"/>
        <end position="595"/>
    </location>
</feature>
<evidence type="ECO:0000250" key="1"/>
<evidence type="ECO:0000256" key="2">
    <source>
        <dbReference type="SAM" id="MobiDB-lite"/>
    </source>
</evidence>
<evidence type="ECO:0000305" key="3"/>
<organism>
    <name type="scientific">Torque teno midi virus 1 (isolate MD1-073)</name>
    <dbReference type="NCBI Taxonomy" id="766184"/>
    <lineage>
        <taxon>Viruses</taxon>
        <taxon>Viruses incertae sedis</taxon>
        <taxon>Anelloviridae</taxon>
        <taxon>Gammatorquevirus</taxon>
        <taxon>Gammatorquevirus homidi1</taxon>
    </lineage>
</organism>
<accession>A4GZ97</accession>
<reference key="1">
    <citation type="journal article" date="2007" name="J. Gen. Virol.">
        <title>Identification and genomic characterization of a novel human torque teno virus of 3.2 kb.</title>
        <authorList>
            <person name="Ninomiya M."/>
            <person name="Nishizawa T."/>
            <person name="Takahashi M."/>
            <person name="Lorenzo F.R."/>
            <person name="Shimosegawa T."/>
            <person name="Okamoto H."/>
        </authorList>
    </citation>
    <scope>NUCLEOTIDE SEQUENCE [GENOMIC DNA]</scope>
</reference>
<proteinExistence type="inferred from homology"/>
<protein>
    <recommendedName>
        <fullName>Capsid protein</fullName>
    </recommendedName>
</protein>
<gene>
    <name type="ORF">ORF1</name>
</gene>
<name>CAPSD_TTVG1</name>